<name>FDL31_ARATH</name>
<gene>
    <name type="ordered locus">At5g22660</name>
    <name type="ORF">MDJ22.8</name>
</gene>
<accession>Q9FNJ5</accession>
<accession>A8MSB2</accession>
<feature type="chain" id="PRO_0000283123" description="F-box/FBD/LRR-repeat protein At5g22660">
    <location>
        <begin position="1"/>
        <end position="450"/>
    </location>
</feature>
<feature type="domain" description="F-box" evidence="1">
    <location>
        <begin position="12"/>
        <end position="58"/>
    </location>
</feature>
<feature type="repeat" description="LRR 1">
    <location>
        <begin position="157"/>
        <end position="181"/>
    </location>
</feature>
<feature type="repeat" description="LRR 2">
    <location>
        <begin position="294"/>
        <end position="317"/>
    </location>
</feature>
<feature type="domain" description="FBD">
    <location>
        <begin position="364"/>
        <end position="416"/>
    </location>
</feature>
<feature type="splice variant" id="VSP_035541" description="In isoform 2." evidence="2">
    <original>IICHYLK</original>
    <variation>VYMHTNI</variation>
    <location>
        <begin position="309"/>
        <end position="315"/>
    </location>
</feature>
<feature type="splice variant" id="VSP_035542" description="In isoform 2." evidence="2">
    <location>
        <begin position="316"/>
        <end position="450"/>
    </location>
</feature>
<comment type="alternative products">
    <event type="alternative splicing"/>
    <isoform>
        <id>Q9FNJ5-1</id>
        <name>1</name>
        <sequence type="displayed"/>
    </isoform>
    <isoform>
        <id>Q9FNJ5-2</id>
        <name>2</name>
        <sequence type="described" ref="VSP_035541 VSP_035542"/>
    </isoform>
</comment>
<comment type="miscellaneous">
    <molecule>Isoform 2</molecule>
    <text evidence="3">May be due to an intron retention.</text>
</comment>
<comment type="sequence caution" evidence="3">
    <conflict type="miscellaneous discrepancy">
        <sequence resource="EMBL" id="BX831572"/>
    </conflict>
    <text>Sequencing errors.</text>
</comment>
<sequence>MSNQGAIRRSGEDRISSLPDHLLSQILSNLPTENAVTTSILSTRWKDLWLSTPVLDIDIDAFDDATTFISFATRFLDSFKDSCLHKLQISFQMEAVDMWTIIPWIEDAVKRRIQHLEVDSRIDHMIDTLPLTVYLSESLVSLRLHLVMLHRFVFVSLPNLKVMHLEENIYSYAETMEKFISSCPVLEDLTVVRNVDEATEKVLRVSSQSLNSLKLVIDSSKCWYNDDSDDWKVVIDAPQLVYLSLKDDQSVSFVINNLCSSAKADIKVSFNVSDIWDLEESFERSNVGKFLTGLSSLRDMTISGTTLKIICHYLKHEPMPQFRNMTRLHAKFYVCDLEMLPCVLESCPNLKSLVLKLKGEMENEEISLSSSVPKCLQSSLENVEIIRPNYGSGEEMKLSKYFLENSLVLKKFKLCRDCHSEEQESLVVRELMTFQRCSSACEINVVRFQR</sequence>
<keyword id="KW-0025">Alternative splicing</keyword>
<keyword id="KW-0433">Leucine-rich repeat</keyword>
<keyword id="KW-1185">Reference proteome</keyword>
<keyword id="KW-0677">Repeat</keyword>
<dbReference type="EMBL" id="AB006699">
    <property type="protein sequence ID" value="BAB11672.1"/>
    <property type="molecule type" value="Genomic_DNA"/>
</dbReference>
<dbReference type="EMBL" id="CP002688">
    <property type="protein sequence ID" value="AED93060.1"/>
    <property type="molecule type" value="Genomic_DNA"/>
</dbReference>
<dbReference type="EMBL" id="CP002688">
    <property type="protein sequence ID" value="AED93061.1"/>
    <property type="molecule type" value="Genomic_DNA"/>
</dbReference>
<dbReference type="EMBL" id="BX831572">
    <property type="status" value="NOT_ANNOTATED_CDS"/>
    <property type="molecule type" value="mRNA"/>
</dbReference>
<dbReference type="RefSeq" id="NP_001078614.1">
    <molecule id="Q9FNJ5-1"/>
    <property type="nucleotide sequence ID" value="NM_001085145.2"/>
</dbReference>
<dbReference type="RefSeq" id="NP_197658.2">
    <molecule id="Q9FNJ5-2"/>
    <property type="nucleotide sequence ID" value="NM_122172.3"/>
</dbReference>
<dbReference type="FunCoup" id="Q9FNJ5">
    <property type="interactions" value="3"/>
</dbReference>
<dbReference type="iPTMnet" id="Q9FNJ5"/>
<dbReference type="PaxDb" id="3702-AT5G22660.2"/>
<dbReference type="EnsemblPlants" id="AT5G22660.1">
    <molecule id="Q9FNJ5-2"/>
    <property type="protein sequence ID" value="AT5G22660.1"/>
    <property type="gene ID" value="AT5G22660"/>
</dbReference>
<dbReference type="EnsemblPlants" id="AT5G22660.2">
    <molecule id="Q9FNJ5-1"/>
    <property type="protein sequence ID" value="AT5G22660.2"/>
    <property type="gene ID" value="AT5G22660"/>
</dbReference>
<dbReference type="GeneID" id="832329"/>
<dbReference type="Gramene" id="AT5G22660.1">
    <molecule id="Q9FNJ5-2"/>
    <property type="protein sequence ID" value="AT5G22660.1"/>
    <property type="gene ID" value="AT5G22660"/>
</dbReference>
<dbReference type="Gramene" id="AT5G22660.2">
    <molecule id="Q9FNJ5-1"/>
    <property type="protein sequence ID" value="AT5G22660.2"/>
    <property type="gene ID" value="AT5G22660"/>
</dbReference>
<dbReference type="KEGG" id="ath:AT5G22660"/>
<dbReference type="Araport" id="AT5G22660"/>
<dbReference type="TAIR" id="AT5G22660"/>
<dbReference type="eggNOG" id="ENOG502T0EG">
    <property type="taxonomic scope" value="Eukaryota"/>
</dbReference>
<dbReference type="HOGENOM" id="CLU_010721_1_3_1"/>
<dbReference type="InParanoid" id="Q9FNJ5"/>
<dbReference type="OMA" id="SIARDMT"/>
<dbReference type="PhylomeDB" id="Q9FNJ5"/>
<dbReference type="PRO" id="PR:Q9FNJ5"/>
<dbReference type="Proteomes" id="UP000006548">
    <property type="component" value="Chromosome 5"/>
</dbReference>
<dbReference type="ExpressionAtlas" id="Q9FNJ5">
    <property type="expression patterns" value="baseline and differential"/>
</dbReference>
<dbReference type="CDD" id="cd22160">
    <property type="entry name" value="F-box_AtFBL13-like"/>
    <property type="match status" value="1"/>
</dbReference>
<dbReference type="Gene3D" id="1.20.1280.50">
    <property type="match status" value="1"/>
</dbReference>
<dbReference type="Gene3D" id="3.80.10.10">
    <property type="entry name" value="Ribonuclease Inhibitor"/>
    <property type="match status" value="1"/>
</dbReference>
<dbReference type="InterPro" id="IPR036047">
    <property type="entry name" value="F-box-like_dom_sf"/>
</dbReference>
<dbReference type="InterPro" id="IPR053781">
    <property type="entry name" value="F-box_AtFBL13-like"/>
</dbReference>
<dbReference type="InterPro" id="IPR001810">
    <property type="entry name" value="F-box_dom"/>
</dbReference>
<dbReference type="InterPro" id="IPR006566">
    <property type="entry name" value="FBD"/>
</dbReference>
<dbReference type="InterPro" id="IPR050232">
    <property type="entry name" value="FBL13/AtMIF1-like"/>
</dbReference>
<dbReference type="InterPro" id="IPR032675">
    <property type="entry name" value="LRR_dom_sf"/>
</dbReference>
<dbReference type="InterPro" id="IPR055411">
    <property type="entry name" value="LRR_FXL15/At3g58940/PEG3-like"/>
</dbReference>
<dbReference type="PANTHER" id="PTHR31900">
    <property type="entry name" value="F-BOX/RNI SUPERFAMILY PROTEIN-RELATED"/>
    <property type="match status" value="1"/>
</dbReference>
<dbReference type="PANTHER" id="PTHR31900:SF25">
    <property type="entry name" value="FBD DOMAIN-CONTAINING PROTEIN"/>
    <property type="match status" value="1"/>
</dbReference>
<dbReference type="Pfam" id="PF00646">
    <property type="entry name" value="F-box"/>
    <property type="match status" value="1"/>
</dbReference>
<dbReference type="Pfam" id="PF08387">
    <property type="entry name" value="FBD"/>
    <property type="match status" value="1"/>
</dbReference>
<dbReference type="Pfam" id="PF24758">
    <property type="entry name" value="LRR_At5g56370"/>
    <property type="match status" value="1"/>
</dbReference>
<dbReference type="SMART" id="SM00579">
    <property type="entry name" value="FBD"/>
    <property type="match status" value="1"/>
</dbReference>
<dbReference type="SMART" id="SM00256">
    <property type="entry name" value="FBOX"/>
    <property type="match status" value="1"/>
</dbReference>
<dbReference type="SUPFAM" id="SSF81383">
    <property type="entry name" value="F-box domain"/>
    <property type="match status" value="1"/>
</dbReference>
<dbReference type="SUPFAM" id="SSF52047">
    <property type="entry name" value="RNI-like"/>
    <property type="match status" value="1"/>
</dbReference>
<dbReference type="PROSITE" id="PS50181">
    <property type="entry name" value="FBOX"/>
    <property type="match status" value="1"/>
</dbReference>
<proteinExistence type="evidence at transcript level"/>
<reference key="1">
    <citation type="journal article" date="1997" name="DNA Res.">
        <title>Structural analysis of Arabidopsis thaliana chromosome 5. II. Sequence features of the regions of 1,044,062 bp covered by thirteen physically assigned P1 clones.</title>
        <authorList>
            <person name="Kotani H."/>
            <person name="Nakamura Y."/>
            <person name="Sato S."/>
            <person name="Kaneko T."/>
            <person name="Asamizu E."/>
            <person name="Miyajima N."/>
            <person name="Tabata S."/>
        </authorList>
    </citation>
    <scope>NUCLEOTIDE SEQUENCE [LARGE SCALE GENOMIC DNA]</scope>
    <source>
        <strain>cv. Columbia</strain>
    </source>
</reference>
<reference key="2">
    <citation type="journal article" date="2017" name="Plant J.">
        <title>Araport11: a complete reannotation of the Arabidopsis thaliana reference genome.</title>
        <authorList>
            <person name="Cheng C.Y."/>
            <person name="Krishnakumar V."/>
            <person name="Chan A.P."/>
            <person name="Thibaud-Nissen F."/>
            <person name="Schobel S."/>
            <person name="Town C.D."/>
        </authorList>
    </citation>
    <scope>GENOME REANNOTATION</scope>
    <source>
        <strain>cv. Columbia</strain>
    </source>
</reference>
<reference key="3">
    <citation type="journal article" date="2004" name="Genome Res.">
        <title>Whole genome sequence comparisons and 'full-length' cDNA sequences: a combined approach to evaluate and improve Arabidopsis genome annotation.</title>
        <authorList>
            <person name="Castelli V."/>
            <person name="Aury J.-M."/>
            <person name="Jaillon O."/>
            <person name="Wincker P."/>
            <person name="Clepet C."/>
            <person name="Menard M."/>
            <person name="Cruaud C."/>
            <person name="Quetier F."/>
            <person name="Scarpelli C."/>
            <person name="Schaechter V."/>
            <person name="Temple G."/>
            <person name="Caboche M."/>
            <person name="Weissenbach J."/>
            <person name="Salanoubat M."/>
        </authorList>
    </citation>
    <scope>NUCLEOTIDE SEQUENCE [LARGE SCALE MRNA] (ISOFORM 2)</scope>
    <source>
        <strain>cv. Columbia</strain>
    </source>
</reference>
<evidence type="ECO:0000255" key="1">
    <source>
        <dbReference type="PROSITE-ProRule" id="PRU00080"/>
    </source>
</evidence>
<evidence type="ECO:0000303" key="2">
    <source>
    </source>
</evidence>
<evidence type="ECO:0000305" key="3"/>
<organism>
    <name type="scientific">Arabidopsis thaliana</name>
    <name type="common">Mouse-ear cress</name>
    <dbReference type="NCBI Taxonomy" id="3702"/>
    <lineage>
        <taxon>Eukaryota</taxon>
        <taxon>Viridiplantae</taxon>
        <taxon>Streptophyta</taxon>
        <taxon>Embryophyta</taxon>
        <taxon>Tracheophyta</taxon>
        <taxon>Spermatophyta</taxon>
        <taxon>Magnoliopsida</taxon>
        <taxon>eudicotyledons</taxon>
        <taxon>Gunneridae</taxon>
        <taxon>Pentapetalae</taxon>
        <taxon>rosids</taxon>
        <taxon>malvids</taxon>
        <taxon>Brassicales</taxon>
        <taxon>Brassicaceae</taxon>
        <taxon>Camelineae</taxon>
        <taxon>Arabidopsis</taxon>
    </lineage>
</organism>
<protein>
    <recommendedName>
        <fullName>F-box/FBD/LRR-repeat protein At5g22660</fullName>
    </recommendedName>
</protein>